<sequence>MATMSSAAVEVISKETIKPRNPTPYQLRNYNMSLLDQYSSLVYVPIILFYPAASDANSTGSKHHDDLHLLKRSLSETLVHFYPMAGRMKDNMTVDCNDEGIDFFEVRIKGRMCDFMMKSDAHLSLLLPSEVASTNFVKEAQVIVQVNMFDCGGTAICFCISNKIADACTMITFIRSLAGTTNIARRGSSIAAPTTNQNLVPSFDSTSLFPPSEQLASQVSYPTQDSTSVDKLVSKRFVFDAAKITSAREKLQSLMHDKYKCHRPTRVEVVSALIWKSAVKSAPPGSISTVTHAMNFRKKMDPPLQDASFGNLCVVVTAVLPATTATTTNPATKKVSSTSNEEQVALDELSDFVALLRREIDKVKGDKGCMEKIIQKFIYGHDASVAKDSDVEDKVTALFMTSWCKFGFYEADFGWGTPVWVTTVPLIEPKYKNMVFMNDMKCGEGIEVWVNFLEDDMTKFEHHLREILQLF</sequence>
<organism>
    <name type="scientific">Papaver somniferum</name>
    <name type="common">Opium poppy</name>
    <dbReference type="NCBI Taxonomy" id="3469"/>
    <lineage>
        <taxon>Eukaryota</taxon>
        <taxon>Viridiplantae</taxon>
        <taxon>Streptophyta</taxon>
        <taxon>Embryophyta</taxon>
        <taxon>Tracheophyta</taxon>
        <taxon>Spermatophyta</taxon>
        <taxon>Magnoliopsida</taxon>
        <taxon>Ranunculales</taxon>
        <taxon>Papaveraceae</taxon>
        <taxon>Papaveroideae</taxon>
        <taxon>Papaver</taxon>
    </lineage>
</organism>
<reference key="1">
    <citation type="journal article" date="2012" name="Science">
        <title>A Papaver somniferum 10-gene cluster for synthesis of the anticancer alkaloid noscapine.</title>
        <authorList>
            <person name="Winzer T."/>
            <person name="Gazda V."/>
            <person name="He Z."/>
            <person name="Kaminski F."/>
            <person name="Kern M."/>
            <person name="Larson T.R."/>
            <person name="Li Y."/>
            <person name="Meade F."/>
            <person name="Teodor R."/>
            <person name="Vaistij F.E."/>
            <person name="Walker C."/>
            <person name="Bowser T.A."/>
            <person name="Graham I.A."/>
        </authorList>
    </citation>
    <scope>NUCLEOTIDE SEQUENCE [GENOMIC DNA]</scope>
</reference>
<reference key="2">
    <citation type="journal article" date="2015" name="Nat. Chem. Biol.">
        <title>Acetylation serves as a protective group in noscapine biosynthesis in opium poppy.</title>
        <authorList>
            <person name="Dang T.T."/>
            <person name="Chen X."/>
            <person name="Facchini P.J."/>
        </authorList>
    </citation>
    <scope>FUNCTION</scope>
    <scope>CATALYTIC ACTIVITY</scope>
    <scope>BIOPHYSICOCHEMICAL PROPERTIES</scope>
</reference>
<reference key="3">
    <citation type="journal article" date="2016" name="Nat. Commun.">
        <title>Engineering biosynthesis of the anticancer alkaloid noscapine in yeast.</title>
        <authorList>
            <person name="Li Y."/>
            <person name="Smolke C.D."/>
        </authorList>
    </citation>
    <scope>FUNCTION</scope>
    <scope>CATALYTIC ACTIVITY</scope>
</reference>
<reference key="4">
    <citation type="journal article" date="2018" name="Proc. Natl. Acad. Sci. U.S.A.">
        <title>Complete biosynthesis of noscapine and halogenated alkaloids in yeast.</title>
        <authorList>
            <person name="Li Y."/>
            <person name="Li S."/>
            <person name="Thodey K."/>
            <person name="Trenchard I."/>
            <person name="Cravens A."/>
            <person name="Smolke C.D."/>
        </authorList>
    </citation>
    <scope>FUNCTION</scope>
</reference>
<name>AT1_PAPSO</name>
<accession>I3PLR4</accession>
<dbReference type="EC" id="2.3.1.285" evidence="1 2"/>
<dbReference type="EMBL" id="JQ659008">
    <property type="protein sequence ID" value="AFB74620.1"/>
    <property type="molecule type" value="Genomic_DNA"/>
</dbReference>
<dbReference type="SMR" id="I3PLR4"/>
<dbReference type="EnsemblPlants" id="RZC84731">
    <property type="protein sequence ID" value="RZC84731"/>
    <property type="gene ID" value="C5167_047517"/>
</dbReference>
<dbReference type="Gramene" id="RZC84731">
    <property type="protein sequence ID" value="RZC84731"/>
    <property type="gene ID" value="C5167_047517"/>
</dbReference>
<dbReference type="KEGG" id="ag:AFB74620"/>
<dbReference type="OMA" id="ASMRINN"/>
<dbReference type="OrthoDB" id="1869548at2759"/>
<dbReference type="BioCyc" id="MetaCyc:MONOMER-20624"/>
<dbReference type="BRENDA" id="2.3.1.285">
    <property type="organism ID" value="4515"/>
</dbReference>
<dbReference type="SABIO-RK" id="I3PLR4"/>
<dbReference type="GO" id="GO:0016746">
    <property type="term" value="F:acyltransferase activity"/>
    <property type="evidence" value="ECO:0007669"/>
    <property type="project" value="UniProtKB-KW"/>
</dbReference>
<dbReference type="GO" id="GO:0009820">
    <property type="term" value="P:alkaloid metabolic process"/>
    <property type="evidence" value="ECO:0007669"/>
    <property type="project" value="UniProtKB-KW"/>
</dbReference>
<dbReference type="Gene3D" id="3.30.559.10">
    <property type="entry name" value="Chloramphenicol acetyltransferase-like domain"/>
    <property type="match status" value="2"/>
</dbReference>
<dbReference type="InterPro" id="IPR023213">
    <property type="entry name" value="CAT-like_dom_sf"/>
</dbReference>
<dbReference type="PANTHER" id="PTHR31623">
    <property type="entry name" value="F21J9.9"/>
    <property type="match status" value="1"/>
</dbReference>
<dbReference type="PANTHER" id="PTHR31623:SF17">
    <property type="entry name" value="F21J9.9"/>
    <property type="match status" value="1"/>
</dbReference>
<dbReference type="Pfam" id="PF02458">
    <property type="entry name" value="Transferase"/>
    <property type="match status" value="1"/>
</dbReference>
<comment type="function">
    <text evidence="1 2 3">Acetyltransferase involved in the biosynthesis of the benzylisoquinoline alkaloid noscapine (PubMed:25485687, PubMed:27378283, PubMed:29610307). Converts (13S,14R)-1,13-dihydroxy-N-methylcanadine to (13S,14R)-13-O-acetyl-1-hydroxy-N-methylcanadine (PubMed:25485687, PubMed:27378283).</text>
</comment>
<comment type="catalytic activity">
    <reaction evidence="1 2">
        <text>(13S,14R)-1,13-dihydroxy-N-methylcanadine + acetyl-CoA = (13S,14R)-13-O-acetyl-1-hydroxy-N-methylcanadine + CoA</text>
        <dbReference type="Rhea" id="RHEA:57384"/>
        <dbReference type="ChEBI" id="CHEBI:57287"/>
        <dbReference type="ChEBI" id="CHEBI:57288"/>
        <dbReference type="ChEBI" id="CHEBI:141639"/>
        <dbReference type="ChEBI" id="CHEBI:141640"/>
        <dbReference type="EC" id="2.3.1.285"/>
    </reaction>
    <physiologicalReaction direction="left-to-right" evidence="7">
        <dbReference type="Rhea" id="RHEA:57385"/>
    </physiologicalReaction>
</comment>
<comment type="biophysicochemical properties">
    <kinetics>
        <KM evidence="1">16.5 uM for (13S,14R)-1,13-dihydroxy-N-methylcanadine</KM>
        <KM evidence="1">35.3 uM for acetyl-CoA</KM>
        <Vmax evidence="1">152.0 nmol/min/mg enzyme with (13S,14R)-1,13-dihydroxy-N-methylcanadine as substrate</Vmax>
        <Vmax evidence="1">324.0 nmol/min/mg enzyme with acetyl-CoA as substrate</Vmax>
    </kinetics>
</comment>
<comment type="pathway">
    <text evidence="6">Alkaloid biosynthesis.</text>
</comment>
<comment type="similarity">
    <text evidence="6">Belongs to the plant acyltransferase family.</text>
</comment>
<proteinExistence type="evidence at protein level"/>
<evidence type="ECO:0000269" key="1">
    <source>
    </source>
</evidence>
<evidence type="ECO:0000269" key="2">
    <source>
    </source>
</evidence>
<evidence type="ECO:0000269" key="3">
    <source>
    </source>
</evidence>
<evidence type="ECO:0000303" key="4">
    <source>
    </source>
</evidence>
<evidence type="ECO:0000303" key="5">
    <source>
    </source>
</evidence>
<evidence type="ECO:0000305" key="6"/>
<evidence type="ECO:0000305" key="7">
    <source>
    </source>
</evidence>
<feature type="chain" id="PRO_0000447600" description="(13S,14R)-1,13-dihydroxy-N-methylcanadine 13-O-acetyltransferase AT1">
    <location>
        <begin position="1"/>
        <end position="471"/>
    </location>
</feature>
<gene>
    <name evidence="4" type="primary">AT1</name>
</gene>
<keyword id="KW-0012">Acyltransferase</keyword>
<keyword id="KW-0017">Alkaloid metabolism</keyword>
<keyword id="KW-0808">Transferase</keyword>
<protein>
    <recommendedName>
        <fullName evidence="6">(13S,14R)-1,13-dihydroxy-N-methylcanadine 13-O-acetyltransferase AT1</fullName>
        <ecNumber evidence="1 2">2.3.1.285</ecNumber>
    </recommendedName>
    <alternativeName>
        <fullName evidence="4">Acetyltransferase 1</fullName>
        <shortName evidence="5">PsAT1</shortName>
    </alternativeName>
</protein>